<dbReference type="EMBL" id="AK127465">
    <property type="protein sequence ID" value="BAC86991.1"/>
    <property type="molecule type" value="mRNA"/>
</dbReference>
<dbReference type="EMBL" id="AL390920">
    <property type="status" value="NOT_ANNOTATED_CDS"/>
    <property type="molecule type" value="Genomic_DNA"/>
</dbReference>
<dbReference type="EMBL" id="BC131825">
    <property type="protein sequence ID" value="AAI31826.1"/>
    <property type="molecule type" value="mRNA"/>
</dbReference>
<dbReference type="EMBL" id="BC137112">
    <property type="protein sequence ID" value="AAI37113.1"/>
    <property type="molecule type" value="mRNA"/>
</dbReference>
<dbReference type="EMBL" id="BC144478">
    <property type="protein sequence ID" value="AAI44479.1"/>
    <property type="molecule type" value="mRNA"/>
</dbReference>
<dbReference type="CCDS" id="CCDS31312.1">
    <molecule id="Q6ZSG2-1"/>
</dbReference>
<dbReference type="RefSeq" id="NP_001034851.1">
    <molecule id="Q6ZSG2-1"/>
    <property type="nucleotide sequence ID" value="NM_001039762.3"/>
</dbReference>
<dbReference type="RefSeq" id="XP_005252751.1">
    <molecule id="Q6ZSG2-1"/>
    <property type="nucleotide sequence ID" value="XM_005252694.5"/>
</dbReference>
<dbReference type="RefSeq" id="XP_016872026.1">
    <molecule id="Q6ZSG2-1"/>
    <property type="nucleotide sequence ID" value="XM_017016537.3"/>
</dbReference>
<dbReference type="RefSeq" id="XP_016872027.1">
    <property type="nucleotide sequence ID" value="XM_017016538.1"/>
</dbReference>
<dbReference type="RefSeq" id="XP_016872028.1">
    <molecule id="Q6ZSG2-1"/>
    <property type="nucleotide sequence ID" value="XM_017016539.3"/>
</dbReference>
<dbReference type="RefSeq" id="XP_016872029.1">
    <property type="nucleotide sequence ID" value="XM_017016540.1"/>
</dbReference>
<dbReference type="RefSeq" id="XP_016872030.1">
    <molecule id="Q6ZSG2-1"/>
    <property type="nucleotide sequence ID" value="XM_017016541.2"/>
</dbReference>
<dbReference type="RefSeq" id="XP_016872031.1">
    <property type="nucleotide sequence ID" value="XM_017016542.1"/>
</dbReference>
<dbReference type="RefSeq" id="XP_047281590.1">
    <molecule id="Q6ZSG2-1"/>
    <property type="nucleotide sequence ID" value="XM_047425634.1"/>
</dbReference>
<dbReference type="RefSeq" id="XP_047281591.1">
    <molecule id="Q6ZSG2-1"/>
    <property type="nucleotide sequence ID" value="XM_047425635.1"/>
</dbReference>
<dbReference type="RefSeq" id="XP_047281592.1">
    <molecule id="Q6ZSG2-1"/>
    <property type="nucleotide sequence ID" value="XM_047425636.1"/>
</dbReference>
<dbReference type="RefSeq" id="XP_047281593.1">
    <molecule id="Q6ZSG2-1"/>
    <property type="nucleotide sequence ID" value="XM_047425637.1"/>
</dbReference>
<dbReference type="RefSeq" id="XP_047281594.1">
    <molecule id="Q6ZSG2-1"/>
    <property type="nucleotide sequence ID" value="XM_047425638.1"/>
</dbReference>
<dbReference type="RefSeq" id="XP_047281595.1">
    <molecule id="Q6ZSG2-2"/>
    <property type="nucleotide sequence ID" value="XM_047425639.1"/>
</dbReference>
<dbReference type="RefSeq" id="XP_054222537.1">
    <molecule id="Q6ZSG2-1"/>
    <property type="nucleotide sequence ID" value="XM_054366562.1"/>
</dbReference>
<dbReference type="RefSeq" id="XP_054222538.1">
    <molecule id="Q6ZSG2-1"/>
    <property type="nucleotide sequence ID" value="XM_054366563.1"/>
</dbReference>
<dbReference type="RefSeq" id="XP_054222539.1">
    <molecule id="Q6ZSG2-1"/>
    <property type="nucleotide sequence ID" value="XM_054366564.1"/>
</dbReference>
<dbReference type="RefSeq" id="XP_054222540.1">
    <molecule id="Q6ZSG2-1"/>
    <property type="nucleotide sequence ID" value="XM_054366565.1"/>
</dbReference>
<dbReference type="RefSeq" id="XP_054222541.1">
    <molecule id="Q6ZSG2-1"/>
    <property type="nucleotide sequence ID" value="XM_054366566.1"/>
</dbReference>
<dbReference type="RefSeq" id="XP_054222542.1">
    <molecule id="Q6ZSG2-2"/>
    <property type="nucleotide sequence ID" value="XM_054366567.1"/>
</dbReference>
<dbReference type="SMR" id="Q6ZSG2"/>
<dbReference type="BioGRID" id="568370">
    <property type="interactions" value="42"/>
</dbReference>
<dbReference type="FunCoup" id="Q6ZSG2">
    <property type="interactions" value="37"/>
</dbReference>
<dbReference type="IntAct" id="Q6ZSG2">
    <property type="interactions" value="36"/>
</dbReference>
<dbReference type="STRING" id="9606.ENSP00000429763"/>
<dbReference type="iPTMnet" id="Q6ZSG2"/>
<dbReference type="PhosphoSitePlus" id="Q6ZSG2"/>
<dbReference type="BioMuta" id="FAM196A"/>
<dbReference type="DMDM" id="74711413"/>
<dbReference type="jPOST" id="Q6ZSG2"/>
<dbReference type="MassIVE" id="Q6ZSG2"/>
<dbReference type="PaxDb" id="9606-ENSP00000429763"/>
<dbReference type="PeptideAtlas" id="Q6ZSG2"/>
<dbReference type="ProteomicsDB" id="68217">
    <molecule id="Q6ZSG2-1"/>
</dbReference>
<dbReference type="ProteomicsDB" id="7257"/>
<dbReference type="Antibodypedia" id="48856">
    <property type="antibodies" value="8 antibodies from 4 providers"/>
</dbReference>
<dbReference type="DNASU" id="642938"/>
<dbReference type="Ensembl" id="ENST00000424811.2">
    <molecule id="Q6ZSG2-2"/>
    <property type="protein sequence ID" value="ENSP00000428730.1"/>
    <property type="gene ID" value="ENSG00000188916.9"/>
</dbReference>
<dbReference type="Ensembl" id="ENST00000522781.6">
    <molecule id="Q6ZSG2-1"/>
    <property type="protein sequence ID" value="ENSP00000429763.1"/>
    <property type="gene ID" value="ENSG00000188916.9"/>
</dbReference>
<dbReference type="Ensembl" id="ENST00000614311.4">
    <molecule id="Q6ZSG2-2"/>
    <property type="protein sequence ID" value="ENSP00000479733.1"/>
    <property type="gene ID" value="ENSG00000188916.9"/>
</dbReference>
<dbReference type="GeneID" id="642938"/>
<dbReference type="KEGG" id="hsa:642938"/>
<dbReference type="MANE-Select" id="ENST00000522781.6">
    <property type="protein sequence ID" value="ENSP00000429763.1"/>
    <property type="RefSeq nucleotide sequence ID" value="NM_001039762.3"/>
    <property type="RefSeq protein sequence ID" value="NP_001034851.1"/>
</dbReference>
<dbReference type="UCSC" id="uc001ljv.2">
    <molecule id="Q6ZSG2-1"/>
    <property type="organism name" value="human"/>
</dbReference>
<dbReference type="AGR" id="HGNC:33859"/>
<dbReference type="CTD" id="642938"/>
<dbReference type="DisGeNET" id="642938"/>
<dbReference type="GeneCards" id="INSYN2A"/>
<dbReference type="HGNC" id="HGNC:33859">
    <property type="gene designation" value="INSYN2A"/>
</dbReference>
<dbReference type="HPA" id="ENSG00000188916">
    <property type="expression patterns" value="Tissue enhanced (brain, retina)"/>
</dbReference>
<dbReference type="MIM" id="617129">
    <property type="type" value="gene"/>
</dbReference>
<dbReference type="neXtProt" id="NX_Q6ZSG2"/>
<dbReference type="OpenTargets" id="ENSG00000188916"/>
<dbReference type="PharmGKB" id="PA165548646"/>
<dbReference type="VEuPathDB" id="HostDB:ENSG00000188916"/>
<dbReference type="eggNOG" id="ENOG502QS3U">
    <property type="taxonomic scope" value="Eukaryota"/>
</dbReference>
<dbReference type="GeneTree" id="ENSGT00530000063787"/>
<dbReference type="HOGENOM" id="CLU_050166_0_0_1"/>
<dbReference type="InParanoid" id="Q6ZSG2"/>
<dbReference type="OMA" id="CPTEDSH"/>
<dbReference type="OrthoDB" id="8679980at2759"/>
<dbReference type="PAN-GO" id="Q6ZSG2">
    <property type="GO annotations" value="2 GO annotations based on evolutionary models"/>
</dbReference>
<dbReference type="PhylomeDB" id="Q6ZSG2"/>
<dbReference type="TreeFam" id="TF333465"/>
<dbReference type="PathwayCommons" id="Q6ZSG2"/>
<dbReference type="SignaLink" id="Q6ZSG2"/>
<dbReference type="BioGRID-ORCS" id="642938">
    <property type="hits" value="8 hits in 1138 CRISPR screens"/>
</dbReference>
<dbReference type="ChiTaRS" id="FAM196A">
    <property type="organism name" value="human"/>
</dbReference>
<dbReference type="GenomeRNAi" id="642938"/>
<dbReference type="Pharos" id="Q6ZSG2">
    <property type="development level" value="Tdark"/>
</dbReference>
<dbReference type="PRO" id="PR:Q6ZSG2"/>
<dbReference type="Proteomes" id="UP000005640">
    <property type="component" value="Chromosome 10"/>
</dbReference>
<dbReference type="RNAct" id="Q6ZSG2">
    <property type="molecule type" value="protein"/>
</dbReference>
<dbReference type="Bgee" id="ENSG00000188916">
    <property type="expression patterns" value="Expressed in male germ line stem cell (sensu Vertebrata) in testis and 100 other cell types or tissues"/>
</dbReference>
<dbReference type="GO" id="GO:0014069">
    <property type="term" value="C:postsynaptic density"/>
    <property type="evidence" value="ECO:0000250"/>
    <property type="project" value="UniProtKB"/>
</dbReference>
<dbReference type="GO" id="GO:0060080">
    <property type="term" value="P:inhibitory postsynaptic potential"/>
    <property type="evidence" value="ECO:0000250"/>
    <property type="project" value="UniProtKB"/>
</dbReference>
<dbReference type="InterPro" id="IPR029337">
    <property type="entry name" value="INSYN2"/>
</dbReference>
<dbReference type="PANTHER" id="PTHR28682:SF1">
    <property type="entry name" value="INHIBITORY SYNAPTIC FACTOR 2A"/>
    <property type="match status" value="1"/>
</dbReference>
<dbReference type="PANTHER" id="PTHR28682">
    <property type="entry name" value="INHIBITORY SYNAPTIC FACTOR 2A-RELATED"/>
    <property type="match status" value="1"/>
</dbReference>
<dbReference type="Pfam" id="PF15265">
    <property type="entry name" value="FAM196"/>
    <property type="match status" value="1"/>
</dbReference>
<feature type="chain" id="PRO_0000329446" description="Inhibitory synaptic factor 2A">
    <location>
        <begin position="1"/>
        <end position="479"/>
    </location>
</feature>
<feature type="region of interest" description="Disordered" evidence="3">
    <location>
        <begin position="226"/>
        <end position="247"/>
    </location>
</feature>
<feature type="region of interest" description="Disordered" evidence="3">
    <location>
        <begin position="315"/>
        <end position="338"/>
    </location>
</feature>
<feature type="region of interest" description="Disordered" evidence="3">
    <location>
        <begin position="449"/>
        <end position="472"/>
    </location>
</feature>
<feature type="coiled-coil region" evidence="2">
    <location>
        <begin position="353"/>
        <end position="379"/>
    </location>
</feature>
<feature type="compositionally biased region" description="Basic and acidic residues" evidence="3">
    <location>
        <begin position="228"/>
        <end position="237"/>
    </location>
</feature>
<feature type="compositionally biased region" description="Polar residues" evidence="3">
    <location>
        <begin position="318"/>
        <end position="337"/>
    </location>
</feature>
<feature type="compositionally biased region" description="Polar residues" evidence="3">
    <location>
        <begin position="449"/>
        <end position="461"/>
    </location>
</feature>
<feature type="modified residue" description="Phosphoserine" evidence="1">
    <location>
        <position position="177"/>
    </location>
</feature>
<feature type="splice variant" id="VSP_056622" description="In isoform 2." evidence="4">
    <location>
        <begin position="396"/>
        <end position="419"/>
    </location>
</feature>
<feature type="sequence variant" id="VAR_042679" description="In dbSNP:rs11594560.">
    <original>A</original>
    <variation>V</variation>
    <location>
        <position position="147"/>
    </location>
</feature>
<protein>
    <recommendedName>
        <fullName evidence="5">Inhibitory synaptic factor 2A</fullName>
        <shortName evidence="5">InSyn2</shortName>
    </recommendedName>
</protein>
<gene>
    <name evidence="6" type="primary">INSYN2A</name>
    <name type="synonym">C10orf141</name>
    <name type="synonym">FAM196A</name>
    <name type="synonym">INSYN2</name>
</gene>
<evidence type="ECO:0000250" key="1">
    <source>
        <dbReference type="UniProtKB" id="Q3USH1"/>
    </source>
</evidence>
<evidence type="ECO:0000255" key="2"/>
<evidence type="ECO:0000256" key="3">
    <source>
        <dbReference type="SAM" id="MobiDB-lite"/>
    </source>
</evidence>
<evidence type="ECO:0000303" key="4">
    <source>
    </source>
</evidence>
<evidence type="ECO:0000305" key="5"/>
<evidence type="ECO:0000312" key="6">
    <source>
        <dbReference type="HGNC" id="HGNC:33859"/>
    </source>
</evidence>
<keyword id="KW-0025">Alternative splicing</keyword>
<keyword id="KW-0175">Coiled coil</keyword>
<keyword id="KW-0597">Phosphoprotein</keyword>
<keyword id="KW-1267">Proteomics identification</keyword>
<keyword id="KW-1185">Reference proteome</keyword>
<keyword id="KW-0770">Synapse</keyword>
<reference key="1">
    <citation type="journal article" date="2004" name="Nat. Genet.">
        <title>Complete sequencing and characterization of 21,243 full-length human cDNAs.</title>
        <authorList>
            <person name="Ota T."/>
            <person name="Suzuki Y."/>
            <person name="Nishikawa T."/>
            <person name="Otsuki T."/>
            <person name="Sugiyama T."/>
            <person name="Irie R."/>
            <person name="Wakamatsu A."/>
            <person name="Hayashi K."/>
            <person name="Sato H."/>
            <person name="Nagai K."/>
            <person name="Kimura K."/>
            <person name="Makita H."/>
            <person name="Sekine M."/>
            <person name="Obayashi M."/>
            <person name="Nishi T."/>
            <person name="Shibahara T."/>
            <person name="Tanaka T."/>
            <person name="Ishii S."/>
            <person name="Yamamoto J."/>
            <person name="Saito K."/>
            <person name="Kawai Y."/>
            <person name="Isono Y."/>
            <person name="Nakamura Y."/>
            <person name="Nagahari K."/>
            <person name="Murakami K."/>
            <person name="Yasuda T."/>
            <person name="Iwayanagi T."/>
            <person name="Wagatsuma M."/>
            <person name="Shiratori A."/>
            <person name="Sudo H."/>
            <person name="Hosoiri T."/>
            <person name="Kaku Y."/>
            <person name="Kodaira H."/>
            <person name="Kondo H."/>
            <person name="Sugawara M."/>
            <person name="Takahashi M."/>
            <person name="Kanda K."/>
            <person name="Yokoi T."/>
            <person name="Furuya T."/>
            <person name="Kikkawa E."/>
            <person name="Omura Y."/>
            <person name="Abe K."/>
            <person name="Kamihara K."/>
            <person name="Katsuta N."/>
            <person name="Sato K."/>
            <person name="Tanikawa M."/>
            <person name="Yamazaki M."/>
            <person name="Ninomiya K."/>
            <person name="Ishibashi T."/>
            <person name="Yamashita H."/>
            <person name="Murakawa K."/>
            <person name="Fujimori K."/>
            <person name="Tanai H."/>
            <person name="Kimata M."/>
            <person name="Watanabe M."/>
            <person name="Hiraoka S."/>
            <person name="Chiba Y."/>
            <person name="Ishida S."/>
            <person name="Ono Y."/>
            <person name="Takiguchi S."/>
            <person name="Watanabe S."/>
            <person name="Yosida M."/>
            <person name="Hotuta T."/>
            <person name="Kusano J."/>
            <person name="Kanehori K."/>
            <person name="Takahashi-Fujii A."/>
            <person name="Hara H."/>
            <person name="Tanase T.-O."/>
            <person name="Nomura Y."/>
            <person name="Togiya S."/>
            <person name="Komai F."/>
            <person name="Hara R."/>
            <person name="Takeuchi K."/>
            <person name="Arita M."/>
            <person name="Imose N."/>
            <person name="Musashino K."/>
            <person name="Yuuki H."/>
            <person name="Oshima A."/>
            <person name="Sasaki N."/>
            <person name="Aotsuka S."/>
            <person name="Yoshikawa Y."/>
            <person name="Matsunawa H."/>
            <person name="Ichihara T."/>
            <person name="Shiohata N."/>
            <person name="Sano S."/>
            <person name="Moriya S."/>
            <person name="Momiyama H."/>
            <person name="Satoh N."/>
            <person name="Takami S."/>
            <person name="Terashima Y."/>
            <person name="Suzuki O."/>
            <person name="Nakagawa S."/>
            <person name="Senoh A."/>
            <person name="Mizoguchi H."/>
            <person name="Goto Y."/>
            <person name="Shimizu F."/>
            <person name="Wakebe H."/>
            <person name="Hishigaki H."/>
            <person name="Watanabe T."/>
            <person name="Sugiyama A."/>
            <person name="Takemoto M."/>
            <person name="Kawakami B."/>
            <person name="Yamazaki M."/>
            <person name="Watanabe K."/>
            <person name="Kumagai A."/>
            <person name="Itakura S."/>
            <person name="Fukuzumi Y."/>
            <person name="Fujimori Y."/>
            <person name="Komiyama M."/>
            <person name="Tashiro H."/>
            <person name="Tanigami A."/>
            <person name="Fujiwara T."/>
            <person name="Ono T."/>
            <person name="Yamada K."/>
            <person name="Fujii Y."/>
            <person name="Ozaki K."/>
            <person name="Hirao M."/>
            <person name="Ohmori Y."/>
            <person name="Kawabata A."/>
            <person name="Hikiji T."/>
            <person name="Kobatake N."/>
            <person name="Inagaki H."/>
            <person name="Ikema Y."/>
            <person name="Okamoto S."/>
            <person name="Okitani R."/>
            <person name="Kawakami T."/>
            <person name="Noguchi S."/>
            <person name="Itoh T."/>
            <person name="Shigeta K."/>
            <person name="Senba T."/>
            <person name="Matsumura K."/>
            <person name="Nakajima Y."/>
            <person name="Mizuno T."/>
            <person name="Morinaga M."/>
            <person name="Sasaki M."/>
            <person name="Togashi T."/>
            <person name="Oyama M."/>
            <person name="Hata H."/>
            <person name="Watanabe M."/>
            <person name="Komatsu T."/>
            <person name="Mizushima-Sugano J."/>
            <person name="Satoh T."/>
            <person name="Shirai Y."/>
            <person name="Takahashi Y."/>
            <person name="Nakagawa K."/>
            <person name="Okumura K."/>
            <person name="Nagase T."/>
            <person name="Nomura N."/>
            <person name="Kikuchi H."/>
            <person name="Masuho Y."/>
            <person name="Yamashita R."/>
            <person name="Nakai K."/>
            <person name="Yada T."/>
            <person name="Nakamura Y."/>
            <person name="Ohara O."/>
            <person name="Isogai T."/>
            <person name="Sugano S."/>
        </authorList>
    </citation>
    <scope>NUCLEOTIDE SEQUENCE [LARGE SCALE MRNA] (ISOFORM 1)</scope>
    <source>
        <tissue>Thalamus</tissue>
    </source>
</reference>
<reference key="2">
    <citation type="journal article" date="2004" name="Nature">
        <title>The DNA sequence and comparative analysis of human chromosome 10.</title>
        <authorList>
            <person name="Deloukas P."/>
            <person name="Earthrowl M.E."/>
            <person name="Grafham D.V."/>
            <person name="Rubenfield M."/>
            <person name="French L."/>
            <person name="Steward C.A."/>
            <person name="Sims S.K."/>
            <person name="Jones M.C."/>
            <person name="Searle S."/>
            <person name="Scott C."/>
            <person name="Howe K."/>
            <person name="Hunt S.E."/>
            <person name="Andrews T.D."/>
            <person name="Gilbert J.G.R."/>
            <person name="Swarbreck D."/>
            <person name="Ashurst J.L."/>
            <person name="Taylor A."/>
            <person name="Battles J."/>
            <person name="Bird C.P."/>
            <person name="Ainscough R."/>
            <person name="Almeida J.P."/>
            <person name="Ashwell R.I.S."/>
            <person name="Ambrose K.D."/>
            <person name="Babbage A.K."/>
            <person name="Bagguley C.L."/>
            <person name="Bailey J."/>
            <person name="Banerjee R."/>
            <person name="Bates K."/>
            <person name="Beasley H."/>
            <person name="Bray-Allen S."/>
            <person name="Brown A.J."/>
            <person name="Brown J.Y."/>
            <person name="Burford D.C."/>
            <person name="Burrill W."/>
            <person name="Burton J."/>
            <person name="Cahill P."/>
            <person name="Camire D."/>
            <person name="Carter N.P."/>
            <person name="Chapman J.C."/>
            <person name="Clark S.Y."/>
            <person name="Clarke G."/>
            <person name="Clee C.M."/>
            <person name="Clegg S."/>
            <person name="Corby N."/>
            <person name="Coulson A."/>
            <person name="Dhami P."/>
            <person name="Dutta I."/>
            <person name="Dunn M."/>
            <person name="Faulkner L."/>
            <person name="Frankish A."/>
            <person name="Frankland J.A."/>
            <person name="Garner P."/>
            <person name="Garnett J."/>
            <person name="Gribble S."/>
            <person name="Griffiths C."/>
            <person name="Grocock R."/>
            <person name="Gustafson E."/>
            <person name="Hammond S."/>
            <person name="Harley J.L."/>
            <person name="Hart E."/>
            <person name="Heath P.D."/>
            <person name="Ho T.P."/>
            <person name="Hopkins B."/>
            <person name="Horne J."/>
            <person name="Howden P.J."/>
            <person name="Huckle E."/>
            <person name="Hynds C."/>
            <person name="Johnson C."/>
            <person name="Johnson D."/>
            <person name="Kana A."/>
            <person name="Kay M."/>
            <person name="Kimberley A.M."/>
            <person name="Kershaw J.K."/>
            <person name="Kokkinaki M."/>
            <person name="Laird G.K."/>
            <person name="Lawlor S."/>
            <person name="Lee H.M."/>
            <person name="Leongamornlert D.A."/>
            <person name="Laird G."/>
            <person name="Lloyd C."/>
            <person name="Lloyd D.M."/>
            <person name="Loveland J."/>
            <person name="Lovell J."/>
            <person name="McLaren S."/>
            <person name="McLay K.E."/>
            <person name="McMurray A."/>
            <person name="Mashreghi-Mohammadi M."/>
            <person name="Matthews L."/>
            <person name="Milne S."/>
            <person name="Nickerson T."/>
            <person name="Nguyen M."/>
            <person name="Overton-Larty E."/>
            <person name="Palmer S.A."/>
            <person name="Pearce A.V."/>
            <person name="Peck A.I."/>
            <person name="Pelan S."/>
            <person name="Phillimore B."/>
            <person name="Porter K."/>
            <person name="Rice C.M."/>
            <person name="Rogosin A."/>
            <person name="Ross M.T."/>
            <person name="Sarafidou T."/>
            <person name="Sehra H.K."/>
            <person name="Shownkeen R."/>
            <person name="Skuce C.D."/>
            <person name="Smith M."/>
            <person name="Standring L."/>
            <person name="Sycamore N."/>
            <person name="Tester J."/>
            <person name="Thorpe A."/>
            <person name="Torcasso W."/>
            <person name="Tracey A."/>
            <person name="Tromans A."/>
            <person name="Tsolas J."/>
            <person name="Wall M."/>
            <person name="Walsh J."/>
            <person name="Wang H."/>
            <person name="Weinstock K."/>
            <person name="West A.P."/>
            <person name="Willey D.L."/>
            <person name="Whitehead S.L."/>
            <person name="Wilming L."/>
            <person name="Wray P.W."/>
            <person name="Young L."/>
            <person name="Chen Y."/>
            <person name="Lovering R.C."/>
            <person name="Moschonas N.K."/>
            <person name="Siebert R."/>
            <person name="Fechtel K."/>
            <person name="Bentley D."/>
            <person name="Durbin R.M."/>
            <person name="Hubbard T."/>
            <person name="Doucette-Stamm L."/>
            <person name="Beck S."/>
            <person name="Smith D.R."/>
            <person name="Rogers J."/>
        </authorList>
    </citation>
    <scope>NUCLEOTIDE SEQUENCE [LARGE SCALE GENOMIC DNA]</scope>
</reference>
<reference key="3">
    <citation type="journal article" date="2004" name="Genome Res.">
        <title>The status, quality, and expansion of the NIH full-length cDNA project: the Mammalian Gene Collection (MGC).</title>
        <authorList>
            <consortium name="The MGC Project Team"/>
        </authorList>
    </citation>
    <scope>NUCLEOTIDE SEQUENCE [LARGE SCALE MRNA] (ISOFORMS 1 AND 2)</scope>
    <source>
        <tissue>Lung</tissue>
    </source>
</reference>
<name>INSY2_HUMAN</name>
<organism>
    <name type="scientific">Homo sapiens</name>
    <name type="common">Human</name>
    <dbReference type="NCBI Taxonomy" id="9606"/>
    <lineage>
        <taxon>Eukaryota</taxon>
        <taxon>Metazoa</taxon>
        <taxon>Chordata</taxon>
        <taxon>Craniata</taxon>
        <taxon>Vertebrata</taxon>
        <taxon>Euteleostomi</taxon>
        <taxon>Mammalia</taxon>
        <taxon>Eutheria</taxon>
        <taxon>Euarchontoglires</taxon>
        <taxon>Primates</taxon>
        <taxon>Haplorrhini</taxon>
        <taxon>Catarrhini</taxon>
        <taxon>Hominidae</taxon>
        <taxon>Homo</taxon>
    </lineage>
</organism>
<proteinExistence type="evidence at protein level"/>
<accession>Q6ZSG2</accession>
<accession>B2RNT4</accession>
<accession>B7ZME7</accession>
<comment type="function">
    <text evidence="1">Component of the protein machinery at the inhibitory synapses, probably acting as a scaffold. Inhibitory synapses dampen neuronal activity through postsynaptic hyperpolarization. This synaptic inhibition is fundamental for the functioning of the central nervous system, shaping and orchestrating the flow of information through neuronal networks to generate a precise neural code.</text>
</comment>
<comment type="subunit">
    <text evidence="1">Interacts with GPHN.</text>
</comment>
<comment type="interaction">
    <interactant intactId="EBI-12146621">
        <id>Q6ZSG2</id>
    </interactant>
    <interactant intactId="EBI-1642333">
        <id>Q9BYV9</id>
        <label>BACH2</label>
    </interactant>
    <organismsDiffer>false</organismsDiffer>
    <experiments>3</experiments>
</comment>
<comment type="interaction">
    <interactant intactId="EBI-12146621">
        <id>Q6ZSG2</id>
    </interactant>
    <interactant intactId="EBI-7116203">
        <id>O75031</id>
        <label>HSF2BP</label>
    </interactant>
    <organismsDiffer>false</organismsDiffer>
    <experiments>3</experiments>
</comment>
<comment type="interaction">
    <interactant intactId="EBI-12146621">
        <id>Q6ZSG2</id>
    </interactant>
    <interactant intactId="EBI-11952721">
        <id>Q05BL1</id>
        <label>TP53BP2</label>
    </interactant>
    <organismsDiffer>false</organismsDiffer>
    <experiments>3</experiments>
</comment>
<comment type="subcellular location">
    <subcellularLocation>
        <location evidence="1">Postsynaptic density</location>
    </subcellularLocation>
</comment>
<comment type="alternative products">
    <event type="alternative splicing"/>
    <isoform>
        <id>Q6ZSG2-1</id>
        <name>1</name>
        <sequence type="displayed"/>
    </isoform>
    <isoform>
        <id>Q6ZSG2-2</id>
        <name>2</name>
        <sequence type="described" ref="VSP_056622"/>
    </isoform>
</comment>
<comment type="similarity">
    <text evidence="5">Belongs to the INSYN2 family.</text>
</comment>
<sequence>MVSKDTGKCILTTSESEVEPAACLALEMKYALDPNRQIKKRNKALQVRFKDICEAQNEQRDTQLSSGQLGEKREAKPVSCRAAYRKYMTVPARRSIPNVTKSTGVQTSPDLKKCYQTFPLDRKKGNLKSLPAADPFKSQNNGFLTDAKEKNEAGPMEEARPCGAGRVHKTTALVFHSNQHMNTVDQPLGVNCTEPCKSPEPLSYGEAALQNSTRPPSEEPDYQLLGRAKQDRGRPNSEEPAPPALRRVFKTEVATVYAPALSARAPEPGLSDSAAASQWSLCPADDERRRATHLNGLQAPSETALACSPPMQCLSPECSEQPSQTHTPPGLGNQPSPTAVAAGEECQRIVPHTEVVDLKAQLQMMENLISSSQETIKVLLGVIQELEKGEAHREGLSYRTGQDTANCDTCRNSACIIYSVELDFKQQEDKLQPVLRKLHPIEETQVIPSPYSQETYSSTPKQKSKTESKKHGRWKLWFL</sequence>